<accession>C9REN7</accession>
<comment type="function">
    <text evidence="1">Component of the proteasome core, a large protease complex with broad specificity involved in protein degradation.</text>
</comment>
<comment type="catalytic activity">
    <reaction evidence="1">
        <text>Cleavage of peptide bonds with very broad specificity.</text>
        <dbReference type="EC" id="3.4.25.1"/>
    </reaction>
</comment>
<comment type="activity regulation">
    <text evidence="1">The formation of the proteasomal ATPase PAN-20S proteasome complex, via the docking of the C-termini of PAN into the intersubunit pockets in the alpha-rings, triggers opening of the gate for substrate entry. Interconversion between the open-gate and close-gate conformations leads to a dynamic regulation of the 20S proteasome proteolysis activity.</text>
</comment>
<comment type="subunit">
    <text evidence="1">The 20S proteasome core is composed of 14 alpha and 14 beta subunits that assemble into four stacked heptameric rings, resulting in a barrel-shaped structure. The two inner rings, each composed of seven catalytic beta subunits, are sandwiched by two outer rings, each composed of seven alpha subunits. The catalytic chamber with the active sites is on the inside of the barrel. Has a gated structure, the ends of the cylinder being occluded by the N-termini of the alpha-subunits. Is capped at one or both ends by the proteasome regulatory ATPase, PAN.</text>
</comment>
<comment type="subcellular location">
    <subcellularLocation>
        <location evidence="1">Cytoplasm</location>
    </subcellularLocation>
</comment>
<comment type="similarity">
    <text evidence="1">Belongs to the peptidase T1B family.</text>
</comment>
<keyword id="KW-0068">Autocatalytic cleavage</keyword>
<keyword id="KW-0963">Cytoplasm</keyword>
<keyword id="KW-0378">Hydrolase</keyword>
<keyword id="KW-0645">Protease</keyword>
<keyword id="KW-0647">Proteasome</keyword>
<keyword id="KW-0888">Threonine protease</keyword>
<keyword id="KW-0865">Zymogen</keyword>
<gene>
    <name evidence="1" type="primary">psmB</name>
    <name type="ordered locus">Metvu_0172</name>
</gene>
<sequence length="223" mass="24196">MDTMKGTTTVGLICDDAVILATDKRASMGNLIADKEAKKLYKIDDYIAMTIAGSVGDAQAIVRALIAEARLYKMRTGKNISPRACATLLSNILHSSRMFPFLTQIIIGGYDLTDGPKLFSLDPLGGMNEEKTFTSTGSGSPIAYGVLEAEYDRDMSIEEGLKLALKALKSAMERDTYSGNGVSVAVITKEGVKLLSDEEITKLLGNDKSKTKKKSTRRRKKSK</sequence>
<organism>
    <name type="scientific">Methanocaldococcus vulcanius (strain ATCC 700851 / DSM 12094 / M7)</name>
    <name type="common">Methanococcus vulcanius</name>
    <dbReference type="NCBI Taxonomy" id="579137"/>
    <lineage>
        <taxon>Archaea</taxon>
        <taxon>Methanobacteriati</taxon>
        <taxon>Methanobacteriota</taxon>
        <taxon>Methanomada group</taxon>
        <taxon>Methanococci</taxon>
        <taxon>Methanococcales</taxon>
        <taxon>Methanocaldococcaceae</taxon>
        <taxon>Methanocaldococcus</taxon>
    </lineage>
</organism>
<feature type="propeptide" id="PRO_0000397338" description="Removed in mature form; by autocatalysis" evidence="1">
    <location>
        <begin position="1"/>
        <end position="6"/>
    </location>
</feature>
<feature type="chain" id="PRO_0000397339" description="Proteasome subunit beta">
    <location>
        <begin position="7"/>
        <end position="223"/>
    </location>
</feature>
<feature type="active site" description="Nucleophile" evidence="1">
    <location>
        <position position="7"/>
    </location>
</feature>
<name>PSB_METVM</name>
<reference key="1">
    <citation type="submission" date="2009-10" db="EMBL/GenBank/DDBJ databases">
        <title>Complete sequence of chromosome of Methanocaldococcus vulcanius M7.</title>
        <authorList>
            <consortium name="US DOE Joint Genome Institute"/>
            <person name="Lucas S."/>
            <person name="Copeland A."/>
            <person name="Lapidus A."/>
            <person name="Glavina del Rio T."/>
            <person name="Dalin E."/>
            <person name="Tice H."/>
            <person name="Bruce D."/>
            <person name="Goodwin L."/>
            <person name="Pitluck S."/>
            <person name="Lcollab F.I."/>
            <person name="Brettin T."/>
            <person name="Detter J.C."/>
            <person name="Han C."/>
            <person name="Tapia R."/>
            <person name="Kuske C.R."/>
            <person name="Schmutz J."/>
            <person name="Larimer F."/>
            <person name="Land M."/>
            <person name="Hauser L."/>
            <person name="Kyrpides N."/>
            <person name="Ovchinikova G."/>
            <person name="Sieprawska-Lupa M."/>
            <person name="Whitman W.B."/>
            <person name="Woyke T."/>
        </authorList>
    </citation>
    <scope>NUCLEOTIDE SEQUENCE [LARGE SCALE GENOMIC DNA]</scope>
    <source>
        <strain>ATCC 700851 / DSM 12094 / M7</strain>
    </source>
</reference>
<evidence type="ECO:0000255" key="1">
    <source>
        <dbReference type="HAMAP-Rule" id="MF_02113"/>
    </source>
</evidence>
<proteinExistence type="inferred from homology"/>
<protein>
    <recommendedName>
        <fullName evidence="1">Proteasome subunit beta</fullName>
        <ecNumber evidence="1">3.4.25.1</ecNumber>
    </recommendedName>
    <alternativeName>
        <fullName evidence="1">20S proteasome beta subunit</fullName>
    </alternativeName>
    <alternativeName>
        <fullName evidence="1">Proteasome core protein PsmB</fullName>
    </alternativeName>
</protein>
<dbReference type="EC" id="3.4.25.1" evidence="1"/>
<dbReference type="EMBL" id="CP001787">
    <property type="protein sequence ID" value="ACX72039.1"/>
    <property type="molecule type" value="Genomic_DNA"/>
</dbReference>
<dbReference type="RefSeq" id="WP_012819585.1">
    <property type="nucleotide sequence ID" value="NC_013407.1"/>
</dbReference>
<dbReference type="SMR" id="C9REN7"/>
<dbReference type="STRING" id="579137.Metvu_0172"/>
<dbReference type="MEROPS" id="T01.002"/>
<dbReference type="GeneID" id="8512500"/>
<dbReference type="KEGG" id="mvu:Metvu_0172"/>
<dbReference type="eggNOG" id="arCOG00970">
    <property type="taxonomic scope" value="Archaea"/>
</dbReference>
<dbReference type="HOGENOM" id="CLU_035750_7_2_2"/>
<dbReference type="OrthoDB" id="6330at2157"/>
<dbReference type="Proteomes" id="UP000002063">
    <property type="component" value="Chromosome"/>
</dbReference>
<dbReference type="GO" id="GO:0005737">
    <property type="term" value="C:cytoplasm"/>
    <property type="evidence" value="ECO:0007669"/>
    <property type="project" value="UniProtKB-SubCell"/>
</dbReference>
<dbReference type="GO" id="GO:0019774">
    <property type="term" value="C:proteasome core complex, beta-subunit complex"/>
    <property type="evidence" value="ECO:0007669"/>
    <property type="project" value="UniProtKB-UniRule"/>
</dbReference>
<dbReference type="GO" id="GO:0004298">
    <property type="term" value="F:threonine-type endopeptidase activity"/>
    <property type="evidence" value="ECO:0007669"/>
    <property type="project" value="UniProtKB-UniRule"/>
</dbReference>
<dbReference type="GO" id="GO:0010498">
    <property type="term" value="P:proteasomal protein catabolic process"/>
    <property type="evidence" value="ECO:0007669"/>
    <property type="project" value="UniProtKB-UniRule"/>
</dbReference>
<dbReference type="CDD" id="cd03764">
    <property type="entry name" value="proteasome_beta_archeal"/>
    <property type="match status" value="1"/>
</dbReference>
<dbReference type="FunFam" id="3.60.20.10:FF:000049">
    <property type="entry name" value="Proteasome subunit beta"/>
    <property type="match status" value="1"/>
</dbReference>
<dbReference type="Gene3D" id="3.60.20.10">
    <property type="entry name" value="Glutamine Phosphoribosylpyrophosphate, subunit 1, domain 1"/>
    <property type="match status" value="1"/>
</dbReference>
<dbReference type="HAMAP" id="MF_02113_A">
    <property type="entry name" value="Proteasome_B_A"/>
    <property type="match status" value="1"/>
</dbReference>
<dbReference type="InterPro" id="IPR029055">
    <property type="entry name" value="Ntn_hydrolases_N"/>
</dbReference>
<dbReference type="InterPro" id="IPR019983">
    <property type="entry name" value="Pept_T1A_Psome_bsu_arc"/>
</dbReference>
<dbReference type="InterPro" id="IPR000243">
    <property type="entry name" value="Pept_T1A_subB"/>
</dbReference>
<dbReference type="InterPro" id="IPR016050">
    <property type="entry name" value="Proteasome_bsu_CS"/>
</dbReference>
<dbReference type="InterPro" id="IPR001353">
    <property type="entry name" value="Proteasome_sua/b"/>
</dbReference>
<dbReference type="InterPro" id="IPR023333">
    <property type="entry name" value="Proteasome_suB-type"/>
</dbReference>
<dbReference type="NCBIfam" id="TIGR03634">
    <property type="entry name" value="arc_protsome_B"/>
    <property type="match status" value="1"/>
</dbReference>
<dbReference type="PANTHER" id="PTHR32194:SF0">
    <property type="entry name" value="ATP-DEPENDENT PROTEASE SUBUNIT HSLV"/>
    <property type="match status" value="1"/>
</dbReference>
<dbReference type="PANTHER" id="PTHR32194">
    <property type="entry name" value="METALLOPROTEASE TLDD"/>
    <property type="match status" value="1"/>
</dbReference>
<dbReference type="Pfam" id="PF00227">
    <property type="entry name" value="Proteasome"/>
    <property type="match status" value="1"/>
</dbReference>
<dbReference type="PRINTS" id="PR00141">
    <property type="entry name" value="PROTEASOME"/>
</dbReference>
<dbReference type="SUPFAM" id="SSF56235">
    <property type="entry name" value="N-terminal nucleophile aminohydrolases (Ntn hydrolases)"/>
    <property type="match status" value="1"/>
</dbReference>
<dbReference type="PROSITE" id="PS00854">
    <property type="entry name" value="PROTEASOME_BETA_1"/>
    <property type="match status" value="1"/>
</dbReference>
<dbReference type="PROSITE" id="PS51476">
    <property type="entry name" value="PROTEASOME_BETA_2"/>
    <property type="match status" value="1"/>
</dbReference>